<sequence>MKIFFAVLVILVLFSMLIWTAYGTPYPVNCKTDRDCVMCGLGISCKNGYCQGCTR</sequence>
<feature type="signal peptide" evidence="1">
    <location>
        <begin position="1"/>
        <end position="23"/>
    </location>
</feature>
<feature type="chain" id="PRO_0000035338" description="Neurotoxin BmP08">
    <location>
        <begin position="24"/>
        <end position="54"/>
    </location>
</feature>
<feature type="disulfide bond">
    <location>
        <begin position="30"/>
        <end position="45"/>
    </location>
</feature>
<feature type="disulfide bond">
    <location>
        <begin position="36"/>
        <end position="50"/>
    </location>
</feature>
<feature type="disulfide bond">
    <location>
        <begin position="39"/>
        <end position="53"/>
    </location>
</feature>
<feature type="strand" evidence="3">
    <location>
        <begin position="29"/>
        <end position="32"/>
    </location>
</feature>
<feature type="helix" evidence="2">
    <location>
        <begin position="33"/>
        <end position="36"/>
    </location>
</feature>
<feature type="turn" evidence="2">
    <location>
        <begin position="37"/>
        <end position="39"/>
    </location>
</feature>
<feature type="strand" evidence="2">
    <location>
        <begin position="47"/>
        <end position="51"/>
    </location>
</feature>
<evidence type="ECO:0000269" key="1">
    <source>
    </source>
</evidence>
<evidence type="ECO:0007829" key="2">
    <source>
        <dbReference type="PDB" id="1RJI"/>
    </source>
</evidence>
<evidence type="ECO:0007829" key="3">
    <source>
        <dbReference type="PDB" id="1WT8"/>
    </source>
</evidence>
<protein>
    <recommendedName>
        <fullName>Neurotoxin BmP08</fullName>
    </recommendedName>
    <alternativeName>
        <fullName>Short-chain peptide BmKX</fullName>
    </alternativeName>
</protein>
<comment type="subcellular location">
    <subcellularLocation>
        <location>Secreted</location>
    </subcellularLocation>
</comment>
<comment type="tissue specificity">
    <text>Expressed by the venom gland.</text>
</comment>
<comment type="mass spectrometry"/>
<comment type="miscellaneous">
    <text>Negative results: does not show any effect on Na(+), Ca(2+) currents, nor on voltage-gated and calcium-activated potassium channels.</text>
</comment>
<organism>
    <name type="scientific">Olivierus martensii</name>
    <name type="common">Manchurian scorpion</name>
    <name type="synonym">Mesobuthus martensii</name>
    <dbReference type="NCBI Taxonomy" id="34649"/>
    <lineage>
        <taxon>Eukaryota</taxon>
        <taxon>Metazoa</taxon>
        <taxon>Ecdysozoa</taxon>
        <taxon>Arthropoda</taxon>
        <taxon>Chelicerata</taxon>
        <taxon>Arachnida</taxon>
        <taxon>Scorpiones</taxon>
        <taxon>Buthida</taxon>
        <taxon>Buthoidea</taxon>
        <taxon>Buthidae</taxon>
        <taxon>Olivierus</taxon>
    </lineage>
</organism>
<dbReference type="EMBL" id="AY125328">
    <property type="protein sequence ID" value="AAM91031.1"/>
    <property type="molecule type" value="mRNA"/>
</dbReference>
<dbReference type="EMBL" id="AY147404">
    <property type="protein sequence ID" value="AAN39841.1"/>
    <property type="molecule type" value="Genomic_DNA"/>
</dbReference>
<dbReference type="PDB" id="1RJI">
    <property type="method" value="NMR"/>
    <property type="chains" value="A=24-54"/>
</dbReference>
<dbReference type="PDB" id="1WT8">
    <property type="method" value="NMR"/>
    <property type="chains" value="A=24-54"/>
</dbReference>
<dbReference type="PDBsum" id="1RJI"/>
<dbReference type="PDBsum" id="1WT8"/>
<dbReference type="SMR" id="Q7Z0H4"/>
<dbReference type="EvolutionaryTrace" id="Q7Z0H4"/>
<dbReference type="GO" id="GO:0005576">
    <property type="term" value="C:extracellular region"/>
    <property type="evidence" value="ECO:0007669"/>
    <property type="project" value="UniProtKB-SubCell"/>
</dbReference>
<dbReference type="InterPro" id="IPR036574">
    <property type="entry name" value="Scorpion_toxin-like_sf"/>
</dbReference>
<dbReference type="SUPFAM" id="SSF57095">
    <property type="entry name" value="Scorpion toxin-like"/>
    <property type="match status" value="1"/>
</dbReference>
<name>SCKI_OLIMR</name>
<reference key="1">
    <citation type="journal article" date="2005" name="Toxicon">
        <title>A novel short-chain peptide BmKX from the Chinese scorpion Buthus martensi karsch, sequencing, gene cloning and structure determination.</title>
        <authorList>
            <person name="Wang C.-G."/>
            <person name="Cai Z."/>
            <person name="Lu W."/>
            <person name="Wu J."/>
            <person name="Xu Y."/>
            <person name="Shi Y."/>
            <person name="Chi C.-W."/>
        </authorList>
    </citation>
    <scope>NUCLEOTIDE SEQUENCE [GENOMIC DNA / MRNA]</scope>
    <scope>PARTIAL PROTEIN SEQUENCE</scope>
    <scope>SYNTHESIS</scope>
    <scope>STRUCTURE BY NMR OF 24-54</scope>
    <scope>DISULFIDE BONDS</scope>
    <source>
        <tissue>Venom</tissue>
    </source>
</reference>
<reference key="2">
    <citation type="journal article" date="2005" name="Biochem. Biophys. Res. Commun.">
        <title>Solution structure of BmP08, a novel short-chain scorpion toxin from Buthus martensi Karsch.</title>
        <authorList>
            <person name="Chen X."/>
            <person name="Li Y."/>
            <person name="Tong X."/>
            <person name="Zhang N."/>
            <person name="Wu G."/>
            <person name="Zhang Q."/>
            <person name="Wu H."/>
        </authorList>
    </citation>
    <scope>PROTEIN SEQUENCE OF 24-54</scope>
    <scope>MASS SPECTROMETRY</scope>
    <scope>STRUCTURE BY NMR OF 24-54</scope>
    <scope>DISULFIDE BONDS</scope>
    <source>
        <tissue>Venom</tissue>
    </source>
</reference>
<keyword id="KW-0002">3D-structure</keyword>
<keyword id="KW-0903">Direct protein sequencing</keyword>
<keyword id="KW-1015">Disulfide bond</keyword>
<keyword id="KW-0964">Secreted</keyword>
<keyword id="KW-0732">Signal</keyword>
<proteinExistence type="evidence at protein level"/>
<accession>Q7Z0H4</accession>